<keyword id="KW-0025">Alternative splicing</keyword>
<keyword id="KW-0067">ATP-binding</keyword>
<keyword id="KW-0325">Glycoprotein</keyword>
<keyword id="KW-0418">Kinase</keyword>
<keyword id="KW-0433">Leucine-rich repeat</keyword>
<keyword id="KW-0472">Membrane</keyword>
<keyword id="KW-0547">Nucleotide-binding</keyword>
<keyword id="KW-0597">Phosphoprotein</keyword>
<keyword id="KW-0675">Receptor</keyword>
<keyword id="KW-1185">Reference proteome</keyword>
<keyword id="KW-0677">Repeat</keyword>
<keyword id="KW-0723">Serine/threonine-protein kinase</keyword>
<keyword id="KW-0732">Signal</keyword>
<keyword id="KW-0808">Transferase</keyword>
<keyword id="KW-0812">Transmembrane</keyword>
<keyword id="KW-1133">Transmembrane helix</keyword>
<feature type="signal peptide" evidence="2">
    <location>
        <begin position="1"/>
        <end position="28"/>
    </location>
</feature>
<feature type="chain" id="PRO_0000387536" description="Probable LRR receptor-like serine/threonine-protein kinase At1g56140">
    <location>
        <begin position="29"/>
        <end position="1033"/>
    </location>
</feature>
<feature type="topological domain" description="Extracellular" evidence="2">
    <location>
        <begin position="29"/>
        <end position="636"/>
    </location>
</feature>
<feature type="transmembrane region" description="Helical" evidence="2">
    <location>
        <begin position="637"/>
        <end position="657"/>
    </location>
</feature>
<feature type="topological domain" description="Cytoplasmic" evidence="2">
    <location>
        <begin position="658"/>
        <end position="1033"/>
    </location>
</feature>
<feature type="repeat" description="LRR 1">
    <location>
        <begin position="97"/>
        <end position="121"/>
    </location>
</feature>
<feature type="repeat" description="LRR 2">
    <location>
        <begin position="122"/>
        <end position="145"/>
    </location>
</feature>
<feature type="repeat" description="LRR 3">
    <location>
        <begin position="147"/>
        <end position="169"/>
    </location>
</feature>
<feature type="repeat" description="LRR 4">
    <location>
        <begin position="170"/>
        <end position="193"/>
    </location>
</feature>
<feature type="repeat" description="LRR 5">
    <location>
        <begin position="195"/>
        <end position="217"/>
    </location>
</feature>
<feature type="repeat" description="LRR 6">
    <location>
        <begin position="241"/>
        <end position="264"/>
    </location>
</feature>
<feature type="repeat" description="LRR 7">
    <location>
        <begin position="265"/>
        <end position="288"/>
    </location>
</feature>
<feature type="repeat" description="LRR 8">
    <location>
        <begin position="289"/>
        <end position="313"/>
    </location>
</feature>
<feature type="repeat" description="LRR 9">
    <location>
        <begin position="314"/>
        <end position="337"/>
    </location>
</feature>
<feature type="repeat" description="LRR 10">
    <location>
        <begin position="339"/>
        <end position="361"/>
    </location>
</feature>
<feature type="repeat" description="LRR 11">
    <location>
        <begin position="363"/>
        <end position="382"/>
    </location>
</feature>
<feature type="repeat" description="LRR 12">
    <location>
        <begin position="383"/>
        <end position="406"/>
    </location>
</feature>
<feature type="repeat" description="LRR 13">
    <location>
        <begin position="422"/>
        <end position="445"/>
    </location>
</feature>
<feature type="domain" description="Protein kinase" evidence="3">
    <location>
        <begin position="693"/>
        <end position="951"/>
    </location>
</feature>
<feature type="region of interest" description="Disordered" evidence="5">
    <location>
        <begin position="1012"/>
        <end position="1033"/>
    </location>
</feature>
<feature type="active site" description="Proton acceptor" evidence="3 4">
    <location>
        <position position="817"/>
    </location>
</feature>
<feature type="binding site" evidence="3">
    <location>
        <begin position="699"/>
        <end position="707"/>
    </location>
    <ligand>
        <name>ATP</name>
        <dbReference type="ChEBI" id="CHEBI:30616"/>
    </ligand>
</feature>
<feature type="binding site" evidence="3">
    <location>
        <position position="721"/>
    </location>
    <ligand>
        <name>ATP</name>
        <dbReference type="ChEBI" id="CHEBI:30616"/>
    </ligand>
</feature>
<feature type="modified residue" description="Phosphothreonine" evidence="1">
    <location>
        <position position="682"/>
    </location>
</feature>
<feature type="modified residue" description="Phosphotyrosine" evidence="1">
    <location>
        <position position="766"/>
    </location>
</feature>
<feature type="modified residue" description="Phosphoserine" evidence="1">
    <location>
        <position position="821"/>
    </location>
</feature>
<feature type="modified residue" description="Phosphoserine" evidence="1">
    <location>
        <position position="850"/>
    </location>
</feature>
<feature type="modified residue" description="Phosphothreonine" evidence="1">
    <location>
        <position position="851"/>
    </location>
</feature>
<feature type="modified residue" description="Phosphothreonine" evidence="1">
    <location>
        <position position="856"/>
    </location>
</feature>
<feature type="modified residue" description="Phosphotyrosine" evidence="1">
    <location>
        <position position="864"/>
    </location>
</feature>
<feature type="glycosylation site" description="N-linked (GlcNAc...) asparagine" evidence="2">
    <location>
        <position position="30"/>
    </location>
</feature>
<feature type="glycosylation site" description="N-linked (GlcNAc...) asparagine" evidence="2">
    <location>
        <position position="60"/>
    </location>
</feature>
<feature type="glycosylation site" description="N-linked (GlcNAc...) asparagine" evidence="2">
    <location>
        <position position="94"/>
    </location>
</feature>
<feature type="glycosylation site" description="N-linked (GlcNAc...) asparagine" evidence="2">
    <location>
        <position position="144"/>
    </location>
</feature>
<feature type="glycosylation site" description="N-linked (GlcNAc...) asparagine" evidence="2">
    <location>
        <position position="181"/>
    </location>
</feature>
<feature type="glycosylation site" description="N-linked (GlcNAc...) asparagine" evidence="2">
    <location>
        <position position="264"/>
    </location>
</feature>
<feature type="glycosylation site" description="N-linked (GlcNAc...) asparagine" evidence="2">
    <location>
        <position position="280"/>
    </location>
</feature>
<feature type="glycosylation site" description="N-linked (GlcNAc...) asparagine" evidence="2">
    <location>
        <position position="301"/>
    </location>
</feature>
<feature type="glycosylation site" description="N-linked (GlcNAc...) asparagine" evidence="2">
    <location>
        <position position="347"/>
    </location>
</feature>
<feature type="glycosylation site" description="N-linked (GlcNAc...) asparagine" evidence="2">
    <location>
        <position position="351"/>
    </location>
</feature>
<feature type="glycosylation site" description="N-linked (GlcNAc...) asparagine" evidence="2">
    <location>
        <position position="393"/>
    </location>
</feature>
<feature type="glycosylation site" description="N-linked (GlcNAc...) asparagine" evidence="2">
    <location>
        <position position="579"/>
    </location>
</feature>
<feature type="splice variant" id="VSP_038285" description="In isoform 4." evidence="8">
    <location>
        <begin position="96"/>
        <end position="988"/>
    </location>
</feature>
<feature type="splice variant" id="VSP_038286" description="In isoform 3." evidence="7">
    <original>RLLSISSNNFSG</original>
    <variation>MTPQPPQSAAFH</variation>
    <location>
        <begin position="173"/>
        <end position="184"/>
    </location>
</feature>
<feature type="splice variant" id="VSP_038287" description="In isoform 3." evidence="7">
    <location>
        <begin position="185"/>
        <end position="1033"/>
    </location>
</feature>
<feature type="splice variant" id="VSP_038288" description="In isoform 2." evidence="6">
    <original>YYGLGLENGGYTVT</original>
    <variation>FYFQHLERFRKTTF</variation>
    <location>
        <begin position="508"/>
        <end position="521"/>
    </location>
</feature>
<feature type="splice variant" id="VSP_038289" description="In isoform 2." evidence="6">
    <location>
        <begin position="522"/>
        <end position="1033"/>
    </location>
</feature>
<feature type="sequence conflict" description="In Ref. 3; ACN59258." evidence="9" ref="3">
    <original>D</original>
    <variation>E</variation>
    <location>
        <position position="275"/>
    </location>
</feature>
<evidence type="ECO:0000250" key="1">
    <source>
        <dbReference type="UniProtKB" id="O48814"/>
    </source>
</evidence>
<evidence type="ECO:0000255" key="2"/>
<evidence type="ECO:0000255" key="3">
    <source>
        <dbReference type="PROSITE-ProRule" id="PRU00159"/>
    </source>
</evidence>
<evidence type="ECO:0000255" key="4">
    <source>
        <dbReference type="PROSITE-ProRule" id="PRU10027"/>
    </source>
</evidence>
<evidence type="ECO:0000256" key="5">
    <source>
        <dbReference type="SAM" id="MobiDB-lite"/>
    </source>
</evidence>
<evidence type="ECO:0000303" key="6">
    <source>
    </source>
</evidence>
<evidence type="ECO:0000303" key="7">
    <source ref="3"/>
</evidence>
<evidence type="ECO:0000303" key="8">
    <source ref="4"/>
</evidence>
<evidence type="ECO:0000305" key="9"/>
<sequence>MLRLWRYLCLLLTVWFLCNFGPVYVVRAQNRTGATTHPDEALALNSIFAAWRIRAPREWNISGELCSGAAIDASVLDSNPAYNPLIKCDCSFENSTICRITNIKVYAMEVVGSIPQQLWTLEYLTNLNLGQNVLTGSLPPALGNLTRMRWMTFGINALSGPIPKEIGLLTDLRLLSISSNNFSGSIPDEIGRCTKLQQIYIDSSGLSGGLPVSFANLVELEQAWIADMELTGQIPDFIGDWTKLTTLRILGTGLSGPIPASFSNLTSLTELRLGDISNGNSSLEFIKDMKSLSILVLRNNNLTGTIPSNIGEYSSLRQLDLSFNKLHGTIPASLFNLRQLTHLFLGNNTLNGSLPTQKGQSLSNVDVSYNDLSGSLPSWVSLPNLNLNLVANNFTLEGLDNRVLSGLNCLQKNFPCNRGKGIYSDFSINCGGPEIRSVTEAVFEREDEDLGPASFVVSAGQRWAASSVGLFAGSSNNIYISTSQSQFVNTLDSELFQSARLSASSLRYYGLGLENGGYTVTLQFAEIQILGSTSNTWRGLGRRRFDIYVQGRLVEKDFDVRRTAGDSTVRAVQREYKANVSQNHLEIHLFWAGKGTCCIPIQGAYGPLISAVGATPDFTPTVGNRPPSKGKSMTGTIVGVIVGVGLLSIISGVVIFIIRKRRKRYTDDEEILSMDVKPYTFTYSELKSATQDFDPSNKLGEGGFGPVYKGKLNDGREVAVKLLSVGSRQGKGQFVAEIVAISAVQHRNLVKLYGCCYEGEHRLLVYEYLPNGSLDQALFGEKTLHLDWSTRYEICLGVARGLVYLHEEARLRIVHRDVKASNILLDSKLVPKVSDFGLAKLYDDKKTHISTRVAGTIGYLAPEYAMRGHLTEKTDVYAFGVVALELVSGRPNSDENLEDEKRYLLEWAWNLHEKGREVELIDHQLTEFNMEEGKRMIGIALLCTQTSHALRPPMSRVVAMLSGDVEVSDVTSKPGYLTDWRFDDTTASSISGFPLRNTQASESFTSFVAPRSEISPRNNDARPMLGAQMNEGR</sequence>
<dbReference type="EC" id="2.7.11.1"/>
<dbReference type="EMBL" id="AC009894">
    <property type="protein sequence ID" value="AAF02840.1"/>
    <property type="status" value="ALT_SEQ"/>
    <property type="molecule type" value="Genomic_DNA"/>
</dbReference>
<dbReference type="EMBL" id="AC069159">
    <property type="protein sequence ID" value="AAG50909.1"/>
    <property type="status" value="ALT_SEQ"/>
    <property type="molecule type" value="Genomic_DNA"/>
</dbReference>
<dbReference type="EMBL" id="CP002684">
    <property type="protein sequence ID" value="AEE33348.1"/>
    <property type="molecule type" value="Genomic_DNA"/>
</dbReference>
<dbReference type="EMBL" id="BT011697">
    <property type="protein sequence ID" value="AAS49060.1"/>
    <property type="molecule type" value="mRNA"/>
</dbReference>
<dbReference type="EMBL" id="BT012256">
    <property type="protein sequence ID" value="AAS76743.1"/>
    <property type="molecule type" value="mRNA"/>
</dbReference>
<dbReference type="EMBL" id="AK228283">
    <property type="protein sequence ID" value="BAF00229.1"/>
    <property type="molecule type" value="mRNA"/>
</dbReference>
<dbReference type="EMBL" id="FJ708663">
    <property type="protein sequence ID" value="ACN59258.1"/>
    <property type="status" value="ALT_FRAME"/>
    <property type="molecule type" value="mRNA"/>
</dbReference>
<dbReference type="PIR" id="G96602">
    <property type="entry name" value="G96602"/>
</dbReference>
<dbReference type="RefSeq" id="NP_564709.2">
    <molecule id="C0LGH3-1"/>
    <property type="nucleotide sequence ID" value="NM_104492.4"/>
</dbReference>
<dbReference type="SMR" id="C0LGH3"/>
<dbReference type="BioGRID" id="27291">
    <property type="interactions" value="19"/>
</dbReference>
<dbReference type="FunCoup" id="C0LGH3">
    <property type="interactions" value="531"/>
</dbReference>
<dbReference type="STRING" id="3702.C0LGH3"/>
<dbReference type="GlyGen" id="C0LGH3">
    <property type="glycosylation" value="13 sites"/>
</dbReference>
<dbReference type="iPTMnet" id="C0LGH3"/>
<dbReference type="PaxDb" id="3702-AT1G56140.1"/>
<dbReference type="ProteomicsDB" id="242906">
    <molecule id="C0LGH3-1"/>
</dbReference>
<dbReference type="EnsemblPlants" id="AT1G56140.1">
    <molecule id="C0LGH3-1"/>
    <property type="protein sequence ID" value="AT1G56140.1"/>
    <property type="gene ID" value="AT1G56140"/>
</dbReference>
<dbReference type="GeneID" id="842066"/>
<dbReference type="Gramene" id="AT1G56140.1">
    <molecule id="C0LGH3-1"/>
    <property type="protein sequence ID" value="AT1G56140.1"/>
    <property type="gene ID" value="AT1G56140"/>
</dbReference>
<dbReference type="KEGG" id="ath:AT1G56140"/>
<dbReference type="Araport" id="AT1G56140"/>
<dbReference type="TAIR" id="AT1G56140"/>
<dbReference type="eggNOG" id="ENOG502QUW9">
    <property type="taxonomic scope" value="Eukaryota"/>
</dbReference>
<dbReference type="HOGENOM" id="CLU_000288_114_2_1"/>
<dbReference type="InParanoid" id="C0LGH3"/>
<dbReference type="OMA" id="FIRHSVW"/>
<dbReference type="PhylomeDB" id="C0LGH3"/>
<dbReference type="PRO" id="PR:C0LGH3"/>
<dbReference type="Proteomes" id="UP000006548">
    <property type="component" value="Chromosome 1"/>
</dbReference>
<dbReference type="ExpressionAtlas" id="C0LGH3">
    <property type="expression patterns" value="baseline and differential"/>
</dbReference>
<dbReference type="GO" id="GO:0005886">
    <property type="term" value="C:plasma membrane"/>
    <property type="evidence" value="ECO:0007005"/>
    <property type="project" value="TAIR"/>
</dbReference>
<dbReference type="GO" id="GO:0005524">
    <property type="term" value="F:ATP binding"/>
    <property type="evidence" value="ECO:0007669"/>
    <property type="project" value="UniProtKB-KW"/>
</dbReference>
<dbReference type="GO" id="GO:0106310">
    <property type="term" value="F:protein serine kinase activity"/>
    <property type="evidence" value="ECO:0007669"/>
    <property type="project" value="RHEA"/>
</dbReference>
<dbReference type="GO" id="GO:0004674">
    <property type="term" value="F:protein serine/threonine kinase activity"/>
    <property type="evidence" value="ECO:0007669"/>
    <property type="project" value="UniProtKB-KW"/>
</dbReference>
<dbReference type="CDD" id="cd14066">
    <property type="entry name" value="STKc_IRAK"/>
    <property type="match status" value="1"/>
</dbReference>
<dbReference type="FunFam" id="2.60.120.430:FF:000002">
    <property type="entry name" value="Leucine-rich repeat receptor-like protein kinase"/>
    <property type="match status" value="1"/>
</dbReference>
<dbReference type="FunFam" id="3.30.200.20:FF:000140">
    <property type="entry name" value="Leucine-rich repeat receptor-like protein kinase"/>
    <property type="match status" value="1"/>
</dbReference>
<dbReference type="FunFam" id="3.80.10.10:FF:000497">
    <property type="entry name" value="Leucine-rich repeat transmembrane protein kinase"/>
    <property type="match status" value="1"/>
</dbReference>
<dbReference type="FunFam" id="1.10.510.10:FF:000044">
    <property type="entry name" value="Putative LRR receptor-like serine/threonine-protein kinase"/>
    <property type="match status" value="1"/>
</dbReference>
<dbReference type="FunFam" id="3.80.10.10:FF:000298">
    <property type="entry name" value="Putative LRR receptor-like serine/threonine-protein kinase"/>
    <property type="match status" value="1"/>
</dbReference>
<dbReference type="Gene3D" id="2.60.120.430">
    <property type="entry name" value="Galactose-binding lectin"/>
    <property type="match status" value="1"/>
</dbReference>
<dbReference type="Gene3D" id="3.30.200.20">
    <property type="entry name" value="Phosphorylase Kinase, domain 1"/>
    <property type="match status" value="1"/>
</dbReference>
<dbReference type="Gene3D" id="3.80.10.10">
    <property type="entry name" value="Ribonuclease Inhibitor"/>
    <property type="match status" value="2"/>
</dbReference>
<dbReference type="Gene3D" id="1.10.510.10">
    <property type="entry name" value="Transferase(Phosphotransferase) domain 1"/>
    <property type="match status" value="1"/>
</dbReference>
<dbReference type="InterPro" id="IPR011009">
    <property type="entry name" value="Kinase-like_dom_sf"/>
</dbReference>
<dbReference type="InterPro" id="IPR001611">
    <property type="entry name" value="Leu-rich_rpt"/>
</dbReference>
<dbReference type="InterPro" id="IPR032675">
    <property type="entry name" value="LRR_dom_sf"/>
</dbReference>
<dbReference type="InterPro" id="IPR051824">
    <property type="entry name" value="LRR_Rcpt-Like_S/T_Kinase"/>
</dbReference>
<dbReference type="InterPro" id="IPR021720">
    <property type="entry name" value="Malectin_dom"/>
</dbReference>
<dbReference type="InterPro" id="IPR000719">
    <property type="entry name" value="Prot_kinase_dom"/>
</dbReference>
<dbReference type="InterPro" id="IPR001245">
    <property type="entry name" value="Ser-Thr/Tyr_kinase_cat_dom"/>
</dbReference>
<dbReference type="InterPro" id="IPR008271">
    <property type="entry name" value="Ser/Thr_kinase_AS"/>
</dbReference>
<dbReference type="PANTHER" id="PTHR48006">
    <property type="entry name" value="LEUCINE-RICH REPEAT-CONTAINING PROTEIN DDB_G0281931-RELATED"/>
    <property type="match status" value="1"/>
</dbReference>
<dbReference type="PANTHER" id="PTHR48006:SF99">
    <property type="entry name" value="PROTEIN KINASE DOMAIN-CONTAINING PROTEIN"/>
    <property type="match status" value="1"/>
</dbReference>
<dbReference type="Pfam" id="PF00560">
    <property type="entry name" value="LRR_1"/>
    <property type="match status" value="2"/>
</dbReference>
<dbReference type="Pfam" id="PF13855">
    <property type="entry name" value="LRR_8"/>
    <property type="match status" value="1"/>
</dbReference>
<dbReference type="Pfam" id="PF11721">
    <property type="entry name" value="Malectin"/>
    <property type="match status" value="1"/>
</dbReference>
<dbReference type="Pfam" id="PF07714">
    <property type="entry name" value="PK_Tyr_Ser-Thr"/>
    <property type="match status" value="1"/>
</dbReference>
<dbReference type="SMART" id="SM00220">
    <property type="entry name" value="S_TKc"/>
    <property type="match status" value="1"/>
</dbReference>
<dbReference type="SUPFAM" id="SSF52058">
    <property type="entry name" value="L domain-like"/>
    <property type="match status" value="1"/>
</dbReference>
<dbReference type="SUPFAM" id="SSF56112">
    <property type="entry name" value="Protein kinase-like (PK-like)"/>
    <property type="match status" value="1"/>
</dbReference>
<dbReference type="PROSITE" id="PS50011">
    <property type="entry name" value="PROTEIN_KINASE_DOM"/>
    <property type="match status" value="1"/>
</dbReference>
<dbReference type="PROSITE" id="PS00108">
    <property type="entry name" value="PROTEIN_KINASE_ST"/>
    <property type="match status" value="1"/>
</dbReference>
<proteinExistence type="evidence at transcript level"/>
<comment type="catalytic activity">
    <reaction>
        <text>L-seryl-[protein] + ATP = O-phospho-L-seryl-[protein] + ADP + H(+)</text>
        <dbReference type="Rhea" id="RHEA:17989"/>
        <dbReference type="Rhea" id="RHEA-COMP:9863"/>
        <dbReference type="Rhea" id="RHEA-COMP:11604"/>
        <dbReference type="ChEBI" id="CHEBI:15378"/>
        <dbReference type="ChEBI" id="CHEBI:29999"/>
        <dbReference type="ChEBI" id="CHEBI:30616"/>
        <dbReference type="ChEBI" id="CHEBI:83421"/>
        <dbReference type="ChEBI" id="CHEBI:456216"/>
        <dbReference type="EC" id="2.7.11.1"/>
    </reaction>
</comment>
<comment type="catalytic activity">
    <reaction>
        <text>L-threonyl-[protein] + ATP = O-phospho-L-threonyl-[protein] + ADP + H(+)</text>
        <dbReference type="Rhea" id="RHEA:46608"/>
        <dbReference type="Rhea" id="RHEA-COMP:11060"/>
        <dbReference type="Rhea" id="RHEA-COMP:11605"/>
        <dbReference type="ChEBI" id="CHEBI:15378"/>
        <dbReference type="ChEBI" id="CHEBI:30013"/>
        <dbReference type="ChEBI" id="CHEBI:30616"/>
        <dbReference type="ChEBI" id="CHEBI:61977"/>
        <dbReference type="ChEBI" id="CHEBI:456216"/>
        <dbReference type="EC" id="2.7.11.1"/>
    </reaction>
</comment>
<comment type="subcellular location">
    <subcellularLocation>
        <location evidence="2">Membrane</location>
        <topology evidence="2">Single-pass type I membrane protein</topology>
    </subcellularLocation>
</comment>
<comment type="alternative products">
    <event type="alternative splicing"/>
    <isoform>
        <id>C0LGH3-1</id>
        <name>1</name>
        <sequence type="displayed"/>
    </isoform>
    <isoform>
        <id>C0LGH3-2</id>
        <name>2</name>
        <sequence type="described" ref="VSP_038288 VSP_038289"/>
    </isoform>
    <isoform>
        <id>C0LGH3-3</id>
        <name>3</name>
        <sequence type="described" ref="VSP_038286 VSP_038287"/>
    </isoform>
    <isoform>
        <id>C0LGH3-4</id>
        <name>4</name>
        <sequence type="described" ref="VSP_038285"/>
    </isoform>
</comment>
<comment type="similarity">
    <text evidence="3">Belongs to the protein kinase superfamily. Ser/Thr protein kinase family.</text>
</comment>
<comment type="sequence caution" evidence="9">
    <conflict type="erroneous gene model prediction">
        <sequence resource="EMBL-CDS" id="AAF02840"/>
    </conflict>
</comment>
<comment type="sequence caution" evidence="9">
    <conflict type="erroneous gene model prediction">
        <sequence resource="EMBL-CDS" id="AAG50909"/>
    </conflict>
</comment>
<comment type="sequence caution" evidence="9">
    <conflict type="frameshift">
        <sequence resource="EMBL-CDS" id="ACN59258"/>
    </conflict>
</comment>
<organism>
    <name type="scientific">Arabidopsis thaliana</name>
    <name type="common">Mouse-ear cress</name>
    <dbReference type="NCBI Taxonomy" id="3702"/>
    <lineage>
        <taxon>Eukaryota</taxon>
        <taxon>Viridiplantae</taxon>
        <taxon>Streptophyta</taxon>
        <taxon>Embryophyta</taxon>
        <taxon>Tracheophyta</taxon>
        <taxon>Spermatophyta</taxon>
        <taxon>Magnoliopsida</taxon>
        <taxon>eudicotyledons</taxon>
        <taxon>Gunneridae</taxon>
        <taxon>Pentapetalae</taxon>
        <taxon>rosids</taxon>
        <taxon>malvids</taxon>
        <taxon>Brassicales</taxon>
        <taxon>Brassicaceae</taxon>
        <taxon>Camelineae</taxon>
        <taxon>Arabidopsis</taxon>
    </lineage>
</organism>
<name>Y5614_ARATH</name>
<reference key="1">
    <citation type="journal article" date="2000" name="Nature">
        <title>Sequence and analysis of chromosome 1 of the plant Arabidopsis thaliana.</title>
        <authorList>
            <person name="Theologis A."/>
            <person name="Ecker J.R."/>
            <person name="Palm C.J."/>
            <person name="Federspiel N.A."/>
            <person name="Kaul S."/>
            <person name="White O."/>
            <person name="Alonso J."/>
            <person name="Altafi H."/>
            <person name="Araujo R."/>
            <person name="Bowman C.L."/>
            <person name="Brooks S.Y."/>
            <person name="Buehler E."/>
            <person name="Chan A."/>
            <person name="Chao Q."/>
            <person name="Chen H."/>
            <person name="Cheuk R.F."/>
            <person name="Chin C.W."/>
            <person name="Chung M.K."/>
            <person name="Conn L."/>
            <person name="Conway A.B."/>
            <person name="Conway A.R."/>
            <person name="Creasy T.H."/>
            <person name="Dewar K."/>
            <person name="Dunn P."/>
            <person name="Etgu P."/>
            <person name="Feldblyum T.V."/>
            <person name="Feng J.-D."/>
            <person name="Fong B."/>
            <person name="Fujii C.Y."/>
            <person name="Gill J.E."/>
            <person name="Goldsmith A.D."/>
            <person name="Haas B."/>
            <person name="Hansen N.F."/>
            <person name="Hughes B."/>
            <person name="Huizar L."/>
            <person name="Hunter J.L."/>
            <person name="Jenkins J."/>
            <person name="Johnson-Hopson C."/>
            <person name="Khan S."/>
            <person name="Khaykin E."/>
            <person name="Kim C.J."/>
            <person name="Koo H.L."/>
            <person name="Kremenetskaia I."/>
            <person name="Kurtz D.B."/>
            <person name="Kwan A."/>
            <person name="Lam B."/>
            <person name="Langin-Hooper S."/>
            <person name="Lee A."/>
            <person name="Lee J.M."/>
            <person name="Lenz C.A."/>
            <person name="Li J.H."/>
            <person name="Li Y.-P."/>
            <person name="Lin X."/>
            <person name="Liu S.X."/>
            <person name="Liu Z.A."/>
            <person name="Luros J.S."/>
            <person name="Maiti R."/>
            <person name="Marziali A."/>
            <person name="Militscher J."/>
            <person name="Miranda M."/>
            <person name="Nguyen M."/>
            <person name="Nierman W.C."/>
            <person name="Osborne B.I."/>
            <person name="Pai G."/>
            <person name="Peterson J."/>
            <person name="Pham P.K."/>
            <person name="Rizzo M."/>
            <person name="Rooney T."/>
            <person name="Rowley D."/>
            <person name="Sakano H."/>
            <person name="Salzberg S.L."/>
            <person name="Schwartz J.R."/>
            <person name="Shinn P."/>
            <person name="Southwick A.M."/>
            <person name="Sun H."/>
            <person name="Tallon L.J."/>
            <person name="Tambunga G."/>
            <person name="Toriumi M.J."/>
            <person name="Town C.D."/>
            <person name="Utterback T."/>
            <person name="Van Aken S."/>
            <person name="Vaysberg M."/>
            <person name="Vysotskaia V.S."/>
            <person name="Walker M."/>
            <person name="Wu D."/>
            <person name="Yu G."/>
            <person name="Fraser C.M."/>
            <person name="Venter J.C."/>
            <person name="Davis R.W."/>
        </authorList>
    </citation>
    <scope>NUCLEOTIDE SEQUENCE [LARGE SCALE GENOMIC DNA]</scope>
    <source>
        <strain>cv. Columbia</strain>
    </source>
</reference>
<reference key="2">
    <citation type="journal article" date="2017" name="Plant J.">
        <title>Araport11: a complete reannotation of the Arabidopsis thaliana reference genome.</title>
        <authorList>
            <person name="Cheng C.Y."/>
            <person name="Krishnakumar V."/>
            <person name="Chan A.P."/>
            <person name="Thibaud-Nissen F."/>
            <person name="Schobel S."/>
            <person name="Town C.D."/>
        </authorList>
    </citation>
    <scope>GENOME REANNOTATION</scope>
    <source>
        <strain>cv. Columbia</strain>
    </source>
</reference>
<reference key="3">
    <citation type="submission" date="2004-03" db="EMBL/GenBank/DDBJ databases">
        <title>Arabidopsis ORF clones.</title>
        <authorList>
            <person name="Cheuk R.F."/>
            <person name="Chen H."/>
            <person name="Kim C.J."/>
            <person name="Shinn P."/>
            <person name="Ecker J.R."/>
        </authorList>
    </citation>
    <scope>NUCLEOTIDE SEQUENCE [LARGE SCALE MRNA] (ISOFORM 3)</scope>
    <source>
        <strain>cv. Columbia</strain>
    </source>
</reference>
<reference key="4">
    <citation type="submission" date="2006-07" db="EMBL/GenBank/DDBJ databases">
        <title>Large-scale analysis of RIKEN Arabidopsis full-length (RAFL) cDNAs.</title>
        <authorList>
            <person name="Totoki Y."/>
            <person name="Seki M."/>
            <person name="Ishida J."/>
            <person name="Nakajima M."/>
            <person name="Enju A."/>
            <person name="Kamiya A."/>
            <person name="Narusaka M."/>
            <person name="Shin-i T."/>
            <person name="Nakagawa M."/>
            <person name="Sakamoto N."/>
            <person name="Oishi K."/>
            <person name="Kohara Y."/>
            <person name="Kobayashi M."/>
            <person name="Toyoda A."/>
            <person name="Sakaki Y."/>
            <person name="Sakurai T."/>
            <person name="Iida K."/>
            <person name="Akiyama K."/>
            <person name="Satou M."/>
            <person name="Toyoda T."/>
            <person name="Konagaya A."/>
            <person name="Carninci P."/>
            <person name="Kawai J."/>
            <person name="Hayashizaki Y."/>
            <person name="Shinozaki K."/>
        </authorList>
    </citation>
    <scope>NUCLEOTIDE SEQUENCE [LARGE SCALE MRNA] (ISOFORM 4)</scope>
    <source>
        <strain>cv. Columbia</strain>
    </source>
</reference>
<reference key="5">
    <citation type="journal article" date="2010" name="BMC Genomics">
        <title>Genome-wide cloning and sequence analysis of leucine-rich repeat receptor-like protein kinase genes in Arabidopsis thaliana.</title>
        <authorList>
            <person name="Gou X."/>
            <person name="He K."/>
            <person name="Yang H."/>
            <person name="Yuan T."/>
            <person name="Lin H."/>
            <person name="Clouse S.D."/>
            <person name="Li J."/>
        </authorList>
    </citation>
    <scope>NUCLEOTIDE SEQUENCE [LARGE SCALE MRNA] (ISOFORM 2)</scope>
    <source>
        <strain>cv. Columbia</strain>
    </source>
</reference>
<accession>C0LGH3</accession>
<accession>Q0WRM0</accession>
<accession>Q6NLS4</accession>
<accession>Q9C7J2</accession>
<accession>Q9SGU0</accession>
<protein>
    <recommendedName>
        <fullName>Probable LRR receptor-like serine/threonine-protein kinase At1g56140</fullName>
        <ecNumber>2.7.11.1</ecNumber>
    </recommendedName>
</protein>
<gene>
    <name type="ordered locus">At1g56140</name>
    <name type="ORF">F14G9.24</name>
    <name type="ORF">T6H22.8.1</name>
</gene>